<gene>
    <name type="primary">GRF2</name>
    <name type="ordered locus">Os06g0204800</name>
    <name type="ordered locus">LOC_Os06g10310</name>
    <name type="ORF">OSJNBb0015B15.12</name>
</gene>
<protein>
    <recommendedName>
        <fullName>Growth-regulating factor 2</fullName>
        <shortName>OsGRF2</shortName>
    </recommendedName>
    <alternativeName>
        <fullName>Transcription activator GRF2</fullName>
    </alternativeName>
</protein>
<comment type="function">
    <text evidence="1">Transcription activator that plays a regulatory role in gibberellin-induced stem elongation.</text>
</comment>
<comment type="subcellular location">
    <subcellularLocation>
        <location evidence="3">Nucleus</location>
    </subcellularLocation>
</comment>
<comment type="domain">
    <text>The QLQ domain and WRC domain may be involved in protein-protein interaction and DNA-binding, respectively.</text>
</comment>
<comment type="similarity">
    <text evidence="4">Belongs to the GRF family.</text>
</comment>
<name>GRF2_ORYSJ</name>
<organism>
    <name type="scientific">Oryza sativa subsp. japonica</name>
    <name type="common">Rice</name>
    <dbReference type="NCBI Taxonomy" id="39947"/>
    <lineage>
        <taxon>Eukaryota</taxon>
        <taxon>Viridiplantae</taxon>
        <taxon>Streptophyta</taxon>
        <taxon>Embryophyta</taxon>
        <taxon>Tracheophyta</taxon>
        <taxon>Spermatophyta</taxon>
        <taxon>Magnoliopsida</taxon>
        <taxon>Liliopsida</taxon>
        <taxon>Poales</taxon>
        <taxon>Poaceae</taxon>
        <taxon>BOP clade</taxon>
        <taxon>Oryzoideae</taxon>
        <taxon>Oryzeae</taxon>
        <taxon>Oryzinae</taxon>
        <taxon>Oryza</taxon>
        <taxon>Oryza sativa</taxon>
    </lineage>
</organism>
<sequence length="301" mass="32228">MMAGGGSGRCLFTATQWQELEHQALIYKYMAAGAPVPPDLLLHLRHRAAAAAAADVDTVPSLAFPPHHLGWGCYGAAAAQYGRRVEDPEPGRCRRTDGKKWRCSREAYGESKYCEKHMHRGKNRSRKPVEMPPPAAAAVYRPSALSISPPPHDADAPSYGAGAGAPLQLHLDSFHASTSPPPSYHRYAHTSSAPLFPSSAAGYGGGWSLSKEHCLTLGGAAADLSLDKPADHHHDATSATTEKPLRRFFDEWPRSDDGRTPWDGTQLSISIPTAAAASPDLAIAGAASRYHSNGDHLRTSE</sequence>
<accession>Q6AWY7</accession>
<accession>A0A0P0WU80</accession>
<dbReference type="EMBL" id="AP005652">
    <property type="protein sequence ID" value="BAD36191.1"/>
    <property type="molecule type" value="Genomic_DNA"/>
</dbReference>
<dbReference type="EMBL" id="AP008212">
    <property type="status" value="NOT_ANNOTATED_CDS"/>
    <property type="molecule type" value="Genomic_DNA"/>
</dbReference>
<dbReference type="EMBL" id="AP014962">
    <property type="protein sequence ID" value="BAS96688.1"/>
    <property type="molecule type" value="Genomic_DNA"/>
</dbReference>
<dbReference type="EMBL" id="BK004857">
    <property type="protein sequence ID" value="DAA05206.1"/>
    <property type="molecule type" value="Genomic_DNA"/>
</dbReference>
<dbReference type="SMR" id="Q6AWY7"/>
<dbReference type="FunCoup" id="Q6AWY7">
    <property type="interactions" value="4"/>
</dbReference>
<dbReference type="STRING" id="39947.Q6AWY7"/>
<dbReference type="PaxDb" id="39947-Q6AWY7"/>
<dbReference type="EnsemblPlants" id="Os06t0204800-00">
    <property type="protein sequence ID" value="Os06t0204800-00"/>
    <property type="gene ID" value="Os06g0204800"/>
</dbReference>
<dbReference type="GeneID" id="107276671"/>
<dbReference type="Gramene" id="Os06t0204800-00">
    <property type="protein sequence ID" value="Os06t0204800-00"/>
    <property type="gene ID" value="Os06g0204800"/>
</dbReference>
<dbReference type="KEGG" id="osa:107276671"/>
<dbReference type="eggNOG" id="ENOG502RAHZ">
    <property type="taxonomic scope" value="Eukaryota"/>
</dbReference>
<dbReference type="HOGENOM" id="CLU_037908_2_0_1"/>
<dbReference type="InParanoid" id="Q6AWY7"/>
<dbReference type="OMA" id="YHRYSHA"/>
<dbReference type="OrthoDB" id="1927209at2759"/>
<dbReference type="Proteomes" id="UP000000763">
    <property type="component" value="Chromosome 6"/>
</dbReference>
<dbReference type="Proteomes" id="UP000059680">
    <property type="component" value="Chromosome 6"/>
</dbReference>
<dbReference type="GO" id="GO:0005634">
    <property type="term" value="C:nucleus"/>
    <property type="evidence" value="ECO:0007669"/>
    <property type="project" value="UniProtKB-SubCell"/>
</dbReference>
<dbReference type="GO" id="GO:0005524">
    <property type="term" value="F:ATP binding"/>
    <property type="evidence" value="ECO:0007669"/>
    <property type="project" value="InterPro"/>
</dbReference>
<dbReference type="GO" id="GO:0032502">
    <property type="term" value="P:developmental process"/>
    <property type="evidence" value="ECO:0007669"/>
    <property type="project" value="InterPro"/>
</dbReference>
<dbReference type="GO" id="GO:0006351">
    <property type="term" value="P:DNA-templated transcription"/>
    <property type="evidence" value="ECO:0007669"/>
    <property type="project" value="InterPro"/>
</dbReference>
<dbReference type="GO" id="GO:0006355">
    <property type="term" value="P:regulation of DNA-templated transcription"/>
    <property type="evidence" value="ECO:0007669"/>
    <property type="project" value="InterPro"/>
</dbReference>
<dbReference type="InterPro" id="IPR014978">
    <property type="entry name" value="Gln-Leu-Gln_QLQ"/>
</dbReference>
<dbReference type="InterPro" id="IPR031137">
    <property type="entry name" value="GRF"/>
</dbReference>
<dbReference type="InterPro" id="IPR014977">
    <property type="entry name" value="WRC_dom"/>
</dbReference>
<dbReference type="PANTHER" id="PTHR31602:SF10">
    <property type="entry name" value="GROWTH-REGULATING FACTOR 2"/>
    <property type="match status" value="1"/>
</dbReference>
<dbReference type="PANTHER" id="PTHR31602">
    <property type="entry name" value="GROWTH-REGULATING FACTOR 5"/>
    <property type="match status" value="1"/>
</dbReference>
<dbReference type="Pfam" id="PF08880">
    <property type="entry name" value="QLQ"/>
    <property type="match status" value="1"/>
</dbReference>
<dbReference type="Pfam" id="PF08879">
    <property type="entry name" value="WRC"/>
    <property type="match status" value="1"/>
</dbReference>
<dbReference type="SMART" id="SM00951">
    <property type="entry name" value="QLQ"/>
    <property type="match status" value="1"/>
</dbReference>
<dbReference type="PROSITE" id="PS51666">
    <property type="entry name" value="QLQ"/>
    <property type="match status" value="1"/>
</dbReference>
<dbReference type="PROSITE" id="PS51667">
    <property type="entry name" value="WRC"/>
    <property type="match status" value="1"/>
</dbReference>
<evidence type="ECO:0000250" key="1"/>
<evidence type="ECO:0000255" key="2">
    <source>
        <dbReference type="PROSITE-ProRule" id="PRU01001"/>
    </source>
</evidence>
<evidence type="ECO:0000255" key="3">
    <source>
        <dbReference type="PROSITE-ProRule" id="PRU01002"/>
    </source>
</evidence>
<evidence type="ECO:0000305" key="4"/>
<reference key="1">
    <citation type="journal article" date="2005" name="Nature">
        <title>The map-based sequence of the rice genome.</title>
        <authorList>
            <consortium name="International rice genome sequencing project (IRGSP)"/>
        </authorList>
    </citation>
    <scope>NUCLEOTIDE SEQUENCE [LARGE SCALE GENOMIC DNA]</scope>
    <source>
        <strain>cv. Nipponbare</strain>
    </source>
</reference>
<reference key="2">
    <citation type="journal article" date="2008" name="Nucleic Acids Res.">
        <title>The rice annotation project database (RAP-DB): 2008 update.</title>
        <authorList>
            <consortium name="The rice annotation project (RAP)"/>
        </authorList>
    </citation>
    <scope>GENOME REANNOTATION</scope>
    <source>
        <strain>cv. Nipponbare</strain>
    </source>
</reference>
<reference key="3">
    <citation type="journal article" date="2013" name="Rice">
        <title>Improvement of the Oryza sativa Nipponbare reference genome using next generation sequence and optical map data.</title>
        <authorList>
            <person name="Kawahara Y."/>
            <person name="de la Bastide M."/>
            <person name="Hamilton J.P."/>
            <person name="Kanamori H."/>
            <person name="McCombie W.R."/>
            <person name="Ouyang S."/>
            <person name="Schwartz D.C."/>
            <person name="Tanaka T."/>
            <person name="Wu J."/>
            <person name="Zhou S."/>
            <person name="Childs K.L."/>
            <person name="Davidson R.M."/>
            <person name="Lin H."/>
            <person name="Quesada-Ocampo L."/>
            <person name="Vaillancourt B."/>
            <person name="Sakai H."/>
            <person name="Lee S.S."/>
            <person name="Kim J."/>
            <person name="Numa H."/>
            <person name="Itoh T."/>
            <person name="Buell C.R."/>
            <person name="Matsumoto T."/>
        </authorList>
    </citation>
    <scope>GENOME REANNOTATION</scope>
    <source>
        <strain>cv. Nipponbare</strain>
    </source>
</reference>
<reference key="4">
    <citation type="journal article" date="2004" name="Plant Cell Physiol.">
        <title>Whole genome analysis of the OsGRF gene family encoding plant-specific putative transcription activators in rice (Oryza sativa L.).</title>
        <authorList>
            <person name="Choi D."/>
            <person name="Kim J.H."/>
            <person name="Kende H."/>
        </authorList>
    </citation>
    <scope>IDENTIFICATION</scope>
    <scope>GENE FAMILY</scope>
    <source>
        <strain>cv. Nipponbare</strain>
    </source>
</reference>
<proteinExistence type="inferred from homology"/>
<keyword id="KW-0010">Activator</keyword>
<keyword id="KW-0539">Nucleus</keyword>
<keyword id="KW-1185">Reference proteome</keyword>
<keyword id="KW-0804">Transcription</keyword>
<keyword id="KW-0805">Transcription regulation</keyword>
<feature type="chain" id="PRO_0000419303" description="Growth-regulating factor 2">
    <location>
        <begin position="1"/>
        <end position="301"/>
    </location>
</feature>
<feature type="domain" description="QLQ" evidence="2">
    <location>
        <begin position="11"/>
        <end position="46"/>
    </location>
</feature>
<feature type="domain" description="WRC" evidence="3">
    <location>
        <begin position="87"/>
        <end position="131"/>
    </location>
</feature>
<feature type="short sequence motif" description="Bipartite nuclear localization signal" evidence="3">
    <location>
        <begin position="83"/>
        <end position="102"/>
    </location>
</feature>
<feature type="short sequence motif" description="Bipartite nuclear localization signal" evidence="3">
    <location>
        <begin position="120"/>
        <end position="127"/>
    </location>
</feature>